<organism>
    <name type="scientific">Saccharolobus solfataricus (strain ATCC 35092 / DSM 1617 / JCM 11322 / P2)</name>
    <name type="common">Sulfolobus solfataricus</name>
    <dbReference type="NCBI Taxonomy" id="273057"/>
    <lineage>
        <taxon>Archaea</taxon>
        <taxon>Thermoproteota</taxon>
        <taxon>Thermoprotei</taxon>
        <taxon>Sulfolobales</taxon>
        <taxon>Sulfolobaceae</taxon>
        <taxon>Saccharolobus</taxon>
    </lineage>
</organism>
<proteinExistence type="evidence at protein level"/>
<dbReference type="EC" id="2.7.4.3"/>
<dbReference type="EMBL" id="AB006440">
    <property type="protein sequence ID" value="BAD95988.1"/>
    <property type="molecule type" value="Genomic_DNA"/>
</dbReference>
<dbReference type="EMBL" id="Y18930">
    <property type="protein sequence ID" value="CAB57609.1"/>
    <property type="molecule type" value="Genomic_DNA"/>
</dbReference>
<dbReference type="EMBL" id="AE006641">
    <property type="protein sequence ID" value="AAK40995.1"/>
    <property type="molecule type" value="Genomic_DNA"/>
</dbReference>
<dbReference type="PIR" id="D90217">
    <property type="entry name" value="D90217"/>
</dbReference>
<dbReference type="PIR" id="JC7902">
    <property type="entry name" value="JC7902"/>
</dbReference>
<dbReference type="RefSeq" id="WP_009991247.1">
    <property type="nucleotide sequence ID" value="NC_002754.1"/>
</dbReference>
<dbReference type="SMR" id="Q9UX83"/>
<dbReference type="FunCoup" id="Q9UX83">
    <property type="interactions" value="114"/>
</dbReference>
<dbReference type="STRING" id="273057.SSO0694"/>
<dbReference type="PaxDb" id="273057-SSO0694"/>
<dbReference type="EnsemblBacteria" id="AAK40995">
    <property type="protein sequence ID" value="AAK40995"/>
    <property type="gene ID" value="SSO0694"/>
</dbReference>
<dbReference type="KEGG" id="sso:SSO0694"/>
<dbReference type="PATRIC" id="fig|273057.12.peg.694"/>
<dbReference type="eggNOG" id="arCOG01039">
    <property type="taxonomic scope" value="Archaea"/>
</dbReference>
<dbReference type="HOGENOM" id="CLU_119371_0_0_2"/>
<dbReference type="InParanoid" id="Q9UX83"/>
<dbReference type="PhylomeDB" id="Q9UX83"/>
<dbReference type="BRENDA" id="2.7.4.3">
    <property type="organism ID" value="6163"/>
</dbReference>
<dbReference type="Proteomes" id="UP000001974">
    <property type="component" value="Chromosome"/>
</dbReference>
<dbReference type="GO" id="GO:0005737">
    <property type="term" value="C:cytoplasm"/>
    <property type="evidence" value="ECO:0007669"/>
    <property type="project" value="UniProtKB-SubCell"/>
</dbReference>
<dbReference type="GO" id="GO:0004017">
    <property type="term" value="F:adenylate kinase activity"/>
    <property type="evidence" value="ECO:0007669"/>
    <property type="project" value="UniProtKB-UniRule"/>
</dbReference>
<dbReference type="GO" id="GO:0005524">
    <property type="term" value="F:ATP binding"/>
    <property type="evidence" value="ECO:0007669"/>
    <property type="project" value="UniProtKB-UniRule"/>
</dbReference>
<dbReference type="Gene3D" id="3.40.50.300">
    <property type="entry name" value="P-loop containing nucleotide triphosphate hydrolases"/>
    <property type="match status" value="1"/>
</dbReference>
<dbReference type="HAMAP" id="MF_00234">
    <property type="entry name" value="Adenylate_kinase_AdkA"/>
    <property type="match status" value="1"/>
</dbReference>
<dbReference type="InterPro" id="IPR023477">
    <property type="entry name" value="Adenylate_kinase_AdkA"/>
</dbReference>
<dbReference type="InterPro" id="IPR027417">
    <property type="entry name" value="P-loop_NTPase"/>
</dbReference>
<dbReference type="NCBIfam" id="NF003122">
    <property type="entry name" value="PRK04040.1"/>
    <property type="match status" value="1"/>
</dbReference>
<dbReference type="Pfam" id="PF13207">
    <property type="entry name" value="AAA_17"/>
    <property type="match status" value="1"/>
</dbReference>
<dbReference type="SUPFAM" id="SSF52540">
    <property type="entry name" value="P-loop containing nucleoside triphosphate hydrolases"/>
    <property type="match status" value="1"/>
</dbReference>
<accession>Q9UX83</accession>
<accession>Q53VM8</accession>
<reference key="1">
    <citation type="journal article" date="2002" name="Biosci. Biotechnol. Biochem.">
        <title>Novel trimeric adenylate kinase from an extremely thermoacidophilic archaeon, Sulfolobus solfataricus: molecular cloning, nucleotide sequencing, expression in Escherichia coli, and characterization of the recombinant enzyme.</title>
        <authorList>
            <person name="Okajima T."/>
            <person name="Kitaguchi D."/>
            <person name="Fujii K."/>
            <person name="Matsuoka H."/>
            <person name="Goto S."/>
            <person name="Uchiyama S."/>
            <person name="Kobayashi Y."/>
            <person name="Tanizawa K."/>
        </authorList>
    </citation>
    <scope>NUCLEOTIDE SEQUENCE [GENOMIC DNA]</scope>
    <scope>PROTEIN SEQUENCE OF 1-14; 34-47; 65-84; 119-127; 136-147 AND 175-192</scope>
    <scope>SUBUNIT STRUCTURE</scope>
    <scope>CHARACTERIZATION</scope>
    <source>
        <strain>ATCC 35091 / DSM 1616 / IFO 15331 / JCM 8930 / P1</strain>
    </source>
</reference>
<reference key="2">
    <citation type="journal article" date="2000" name="Genome">
        <title>Gene content and organization of a 281-kbp contig from the genome of the extremely thermophilic archaeon, Sulfolobus solfataricus P2.</title>
        <authorList>
            <person name="Charlebois R.L."/>
            <person name="Singh R.K."/>
            <person name="Chan-Weiher C.C.-Y."/>
            <person name="Allard G."/>
            <person name="Chow C."/>
            <person name="Confalonieri F."/>
            <person name="Curtis B."/>
            <person name="Duguet M."/>
            <person name="Erauso G."/>
            <person name="Faguy D."/>
            <person name="Gaasterland T."/>
            <person name="Garrett R.A."/>
            <person name="Gordon P."/>
            <person name="Jeffries A.C."/>
            <person name="Kozera C."/>
            <person name="Kushwaha N."/>
            <person name="Lafleur E."/>
            <person name="Medina N."/>
            <person name="Peng X."/>
            <person name="Penny S.L."/>
            <person name="She Q."/>
            <person name="St Jean A."/>
            <person name="van der Oost J."/>
            <person name="Young F."/>
            <person name="Zivanovic Y."/>
            <person name="Doolittle W.F."/>
            <person name="Ragan M.A."/>
            <person name="Sensen C.W."/>
        </authorList>
    </citation>
    <scope>NUCLEOTIDE SEQUENCE [LARGE SCALE GENOMIC DNA]</scope>
    <source>
        <strain>ATCC 35092 / DSM 1617 / JCM 11322 / P2</strain>
    </source>
</reference>
<reference key="3">
    <citation type="journal article" date="2001" name="Proc. Natl. Acad. Sci. U.S.A.">
        <title>The complete genome of the crenarchaeon Sulfolobus solfataricus P2.</title>
        <authorList>
            <person name="She Q."/>
            <person name="Singh R.K."/>
            <person name="Confalonieri F."/>
            <person name="Zivanovic Y."/>
            <person name="Allard G."/>
            <person name="Awayez M.J."/>
            <person name="Chan-Weiher C.C.-Y."/>
            <person name="Clausen I.G."/>
            <person name="Curtis B.A."/>
            <person name="De Moors A."/>
            <person name="Erauso G."/>
            <person name="Fletcher C."/>
            <person name="Gordon P.M.K."/>
            <person name="Heikamp-de Jong I."/>
            <person name="Jeffries A.C."/>
            <person name="Kozera C.J."/>
            <person name="Medina N."/>
            <person name="Peng X."/>
            <person name="Thi-Ngoc H.P."/>
            <person name="Redder P."/>
            <person name="Schenk M.E."/>
            <person name="Theriault C."/>
            <person name="Tolstrup N."/>
            <person name="Charlebois R.L."/>
            <person name="Doolittle W.F."/>
            <person name="Duguet M."/>
            <person name="Gaasterland T."/>
            <person name="Garrett R.A."/>
            <person name="Ragan M.A."/>
            <person name="Sensen C.W."/>
            <person name="Van der Oost J."/>
        </authorList>
    </citation>
    <scope>NUCLEOTIDE SEQUENCE [LARGE SCALE GENOMIC DNA]</scope>
    <source>
        <strain>ATCC 35092 / DSM 1617 / JCM 11322 / P2</strain>
    </source>
</reference>
<evidence type="ECO:0000250" key="1"/>
<evidence type="ECO:0000269" key="2">
    <source>
    </source>
</evidence>
<evidence type="ECO:0000305" key="3"/>
<keyword id="KW-0067">ATP-binding</keyword>
<keyword id="KW-0963">Cytoplasm</keyword>
<keyword id="KW-0903">Direct protein sequencing</keyword>
<keyword id="KW-0418">Kinase</keyword>
<keyword id="KW-0547">Nucleotide-binding</keyword>
<keyword id="KW-1185">Reference proteome</keyword>
<keyword id="KW-0808">Transferase</keyword>
<comment type="catalytic activity">
    <reaction>
        <text>AMP + ATP = 2 ADP</text>
        <dbReference type="Rhea" id="RHEA:12973"/>
        <dbReference type="ChEBI" id="CHEBI:30616"/>
        <dbReference type="ChEBI" id="CHEBI:456215"/>
        <dbReference type="ChEBI" id="CHEBI:456216"/>
        <dbReference type="EC" id="2.7.4.3"/>
    </reaction>
</comment>
<comment type="subunit">
    <text evidence="2">Homotrimer.</text>
</comment>
<comment type="subcellular location">
    <subcellularLocation>
        <location evidence="1">Cytoplasm</location>
    </subcellularLocation>
</comment>
<comment type="similarity">
    <text evidence="3">Belongs to the archaeal adenylate kinase family.</text>
</comment>
<sequence length="195" mass="21326">MKIGIVTGIPGVGKTTVLSFADKILTEKGISHKIVNYGDYMLNTALKEGYVKSRDEIRKLQIEKQRELQALAARRIVEDLSLLGDEGIGLIDTHAVIRTPAGYLPGLPRHVIEVLSPKVIFLLEADPKIILERQKRDSSRARTDYSDTAVINEVIQFARYSAMASAVLVGASVKVVVNQEGDPSIAASEIINSLM</sequence>
<feature type="chain" id="PRO_0000131826" description="Adenylate kinase">
    <location>
        <begin position="1"/>
        <end position="195"/>
    </location>
</feature>
<feature type="binding site" evidence="1">
    <location>
        <begin position="8"/>
        <end position="16"/>
    </location>
    <ligand>
        <name>ATP</name>
        <dbReference type="ChEBI" id="CHEBI:30616"/>
    </ligand>
</feature>
<feature type="sequence conflict" description="In Ref. 1; BAD95988." evidence="3" ref="1">
    <original>A</original>
    <variation>R</variation>
    <location>
        <position position="72"/>
    </location>
</feature>
<protein>
    <recommendedName>
        <fullName>Adenylate kinase</fullName>
        <shortName>AK</shortName>
        <ecNumber>2.7.4.3</ecNumber>
    </recommendedName>
    <alternativeName>
        <fullName>ATP-AMP transphosphorylase</fullName>
    </alternativeName>
</protein>
<name>KADA_SACS2</name>
<gene>
    <name type="primary">adkA</name>
    <name type="ordered locus">SSO0694</name>
    <name type="ORF">C10_036</name>
</gene>